<reference key="1">
    <citation type="journal article" date="2002" name="Nature">
        <title>The genome sequence of Schizosaccharomyces pombe.</title>
        <authorList>
            <person name="Wood V."/>
            <person name="Gwilliam R."/>
            <person name="Rajandream M.A."/>
            <person name="Lyne M.H."/>
            <person name="Lyne R."/>
            <person name="Stewart A."/>
            <person name="Sgouros J.G."/>
            <person name="Peat N."/>
            <person name="Hayles J."/>
            <person name="Baker S.G."/>
            <person name="Basham D."/>
            <person name="Bowman S."/>
            <person name="Brooks K."/>
            <person name="Brown D."/>
            <person name="Brown S."/>
            <person name="Chillingworth T."/>
            <person name="Churcher C.M."/>
            <person name="Collins M."/>
            <person name="Connor R."/>
            <person name="Cronin A."/>
            <person name="Davis P."/>
            <person name="Feltwell T."/>
            <person name="Fraser A."/>
            <person name="Gentles S."/>
            <person name="Goble A."/>
            <person name="Hamlin N."/>
            <person name="Harris D.E."/>
            <person name="Hidalgo J."/>
            <person name="Hodgson G."/>
            <person name="Holroyd S."/>
            <person name="Hornsby T."/>
            <person name="Howarth S."/>
            <person name="Huckle E.J."/>
            <person name="Hunt S."/>
            <person name="Jagels K."/>
            <person name="James K.D."/>
            <person name="Jones L."/>
            <person name="Jones M."/>
            <person name="Leather S."/>
            <person name="McDonald S."/>
            <person name="McLean J."/>
            <person name="Mooney P."/>
            <person name="Moule S."/>
            <person name="Mungall K.L."/>
            <person name="Murphy L.D."/>
            <person name="Niblett D."/>
            <person name="Odell C."/>
            <person name="Oliver K."/>
            <person name="O'Neil S."/>
            <person name="Pearson D."/>
            <person name="Quail M.A."/>
            <person name="Rabbinowitsch E."/>
            <person name="Rutherford K.M."/>
            <person name="Rutter S."/>
            <person name="Saunders D."/>
            <person name="Seeger K."/>
            <person name="Sharp S."/>
            <person name="Skelton J."/>
            <person name="Simmonds M.N."/>
            <person name="Squares R."/>
            <person name="Squares S."/>
            <person name="Stevens K."/>
            <person name="Taylor K."/>
            <person name="Taylor R.G."/>
            <person name="Tivey A."/>
            <person name="Walsh S.V."/>
            <person name="Warren T."/>
            <person name="Whitehead S."/>
            <person name="Woodward J.R."/>
            <person name="Volckaert G."/>
            <person name="Aert R."/>
            <person name="Robben J."/>
            <person name="Grymonprez B."/>
            <person name="Weltjens I."/>
            <person name="Vanstreels E."/>
            <person name="Rieger M."/>
            <person name="Schaefer M."/>
            <person name="Mueller-Auer S."/>
            <person name="Gabel C."/>
            <person name="Fuchs M."/>
            <person name="Duesterhoeft A."/>
            <person name="Fritzc C."/>
            <person name="Holzer E."/>
            <person name="Moestl D."/>
            <person name="Hilbert H."/>
            <person name="Borzym K."/>
            <person name="Langer I."/>
            <person name="Beck A."/>
            <person name="Lehrach H."/>
            <person name="Reinhardt R."/>
            <person name="Pohl T.M."/>
            <person name="Eger P."/>
            <person name="Zimmermann W."/>
            <person name="Wedler H."/>
            <person name="Wambutt R."/>
            <person name="Purnelle B."/>
            <person name="Goffeau A."/>
            <person name="Cadieu E."/>
            <person name="Dreano S."/>
            <person name="Gloux S."/>
            <person name="Lelaure V."/>
            <person name="Mottier S."/>
            <person name="Galibert F."/>
            <person name="Aves S.J."/>
            <person name="Xiang Z."/>
            <person name="Hunt C."/>
            <person name="Moore K."/>
            <person name="Hurst S.M."/>
            <person name="Lucas M."/>
            <person name="Rochet M."/>
            <person name="Gaillardin C."/>
            <person name="Tallada V.A."/>
            <person name="Garzon A."/>
            <person name="Thode G."/>
            <person name="Daga R.R."/>
            <person name="Cruzado L."/>
            <person name="Jimenez J."/>
            <person name="Sanchez M."/>
            <person name="del Rey F."/>
            <person name="Benito J."/>
            <person name="Dominguez A."/>
            <person name="Revuelta J.L."/>
            <person name="Moreno S."/>
            <person name="Armstrong J."/>
            <person name="Forsburg S.L."/>
            <person name="Cerutti L."/>
            <person name="Lowe T."/>
            <person name="McCombie W.R."/>
            <person name="Paulsen I."/>
            <person name="Potashkin J."/>
            <person name="Shpakovski G.V."/>
            <person name="Ussery D."/>
            <person name="Barrell B.G."/>
            <person name="Nurse P."/>
        </authorList>
    </citation>
    <scope>NUCLEOTIDE SEQUENCE [LARGE SCALE GENOMIC DNA]</scope>
    <source>
        <strain>972 / ATCC 24843</strain>
    </source>
</reference>
<reference key="2">
    <citation type="journal article" date="2006" name="Nat. Biotechnol.">
        <title>ORFeome cloning and global analysis of protein localization in the fission yeast Schizosaccharomyces pombe.</title>
        <authorList>
            <person name="Matsuyama A."/>
            <person name="Arai R."/>
            <person name="Yashiroda Y."/>
            <person name="Shirai A."/>
            <person name="Kamata A."/>
            <person name="Sekido S."/>
            <person name="Kobayashi Y."/>
            <person name="Hashimoto A."/>
            <person name="Hamamoto M."/>
            <person name="Hiraoka Y."/>
            <person name="Horinouchi S."/>
            <person name="Yoshida M."/>
        </authorList>
    </citation>
    <scope>SUBCELLULAR LOCATION [LARGE SCALE ANALYSIS]</scope>
</reference>
<feature type="chain" id="PRO_0000317228" description="Large ribosomal subunit protein bL17m">
    <location>
        <begin position="1"/>
        <end position="207"/>
    </location>
</feature>
<feature type="region of interest" description="Disordered" evidence="2">
    <location>
        <begin position="173"/>
        <end position="207"/>
    </location>
</feature>
<feature type="compositionally biased region" description="Basic and acidic residues" evidence="2">
    <location>
        <begin position="173"/>
        <end position="200"/>
    </location>
</feature>
<sequence length="207" mass="23967">MTKTLYYRKLGRTSAHRQALLRNLVTSLVKHESIQTTWAKAKEAQRFAEKLITMAKRANPQNNRKGLAEGMVFEKETTLKKVFDVLVPRYNGRRCGYTRLLKLPPRSTDNAPMGVLEFVDGPKDIRFHMTAKTVGICLAQQKALTPITRKNIHKVLLFRKNGKAEFDQLVQKEKESEHARLKEDHEDEKTVKKDWKRGDPIPRPTYI</sequence>
<accession>O94345</accession>
<proteinExistence type="inferred from homology"/>
<evidence type="ECO:0000250" key="1">
    <source>
        <dbReference type="UniProtKB" id="P22353"/>
    </source>
</evidence>
<evidence type="ECO:0000256" key="2">
    <source>
        <dbReference type="SAM" id="MobiDB-lite"/>
    </source>
</evidence>
<evidence type="ECO:0000269" key="3">
    <source>
    </source>
</evidence>
<evidence type="ECO:0000305" key="4"/>
<dbReference type="EMBL" id="CU329671">
    <property type="protein sequence ID" value="CAA22203.1"/>
    <property type="molecule type" value="Genomic_DNA"/>
</dbReference>
<dbReference type="PIR" id="T39349">
    <property type="entry name" value="T39349"/>
</dbReference>
<dbReference type="RefSeq" id="NP_595137.1">
    <property type="nucleotide sequence ID" value="NM_001021045.2"/>
</dbReference>
<dbReference type="SMR" id="O94345"/>
<dbReference type="BioGRID" id="276738">
    <property type="interactions" value="14"/>
</dbReference>
<dbReference type="ComplexPortal" id="CPX-10323">
    <property type="entry name" value="54S mitochondrial large ribosomal subunit"/>
</dbReference>
<dbReference type="FunCoup" id="O94345">
    <property type="interactions" value="316"/>
</dbReference>
<dbReference type="STRING" id="284812.O94345"/>
<dbReference type="PaxDb" id="4896-SPBC1271.13.1"/>
<dbReference type="EnsemblFungi" id="SPBC1271.13.1">
    <property type="protein sequence ID" value="SPBC1271.13.1:pep"/>
    <property type="gene ID" value="SPBC1271.13"/>
</dbReference>
<dbReference type="GeneID" id="2540205"/>
<dbReference type="KEGG" id="spo:2540205"/>
<dbReference type="PomBase" id="SPBC1271.13">
    <property type="gene designation" value="mrpl8"/>
</dbReference>
<dbReference type="VEuPathDB" id="FungiDB:SPBC1271.13"/>
<dbReference type="eggNOG" id="KOG3280">
    <property type="taxonomic scope" value="Eukaryota"/>
</dbReference>
<dbReference type="HOGENOM" id="CLU_074407_1_2_1"/>
<dbReference type="InParanoid" id="O94345"/>
<dbReference type="OMA" id="HIQTTYA"/>
<dbReference type="PhylomeDB" id="O94345"/>
<dbReference type="PRO" id="PR:O94345"/>
<dbReference type="Proteomes" id="UP000002485">
    <property type="component" value="Chromosome II"/>
</dbReference>
<dbReference type="GO" id="GO:0005762">
    <property type="term" value="C:mitochondrial large ribosomal subunit"/>
    <property type="evidence" value="ECO:0000318"/>
    <property type="project" value="GO_Central"/>
</dbReference>
<dbReference type="GO" id="GO:0005739">
    <property type="term" value="C:mitochondrion"/>
    <property type="evidence" value="ECO:0007005"/>
    <property type="project" value="PomBase"/>
</dbReference>
<dbReference type="GO" id="GO:0003735">
    <property type="term" value="F:structural constituent of ribosome"/>
    <property type="evidence" value="ECO:0000318"/>
    <property type="project" value="GO_Central"/>
</dbReference>
<dbReference type="GO" id="GO:0032543">
    <property type="term" value="P:mitochondrial translation"/>
    <property type="evidence" value="ECO:0000250"/>
    <property type="project" value="PomBase"/>
</dbReference>
<dbReference type="FunFam" id="3.90.1030.10:FF:000005">
    <property type="entry name" value="Probable 50S ribosomal protein L17"/>
    <property type="match status" value="1"/>
</dbReference>
<dbReference type="Gene3D" id="3.90.1030.10">
    <property type="entry name" value="Ribosomal protein L17"/>
    <property type="match status" value="1"/>
</dbReference>
<dbReference type="InterPro" id="IPR000456">
    <property type="entry name" value="Ribosomal_bL17"/>
</dbReference>
<dbReference type="InterPro" id="IPR047859">
    <property type="entry name" value="Ribosomal_bL17_CS"/>
</dbReference>
<dbReference type="InterPro" id="IPR036373">
    <property type="entry name" value="Ribosomal_bL17_sf"/>
</dbReference>
<dbReference type="NCBIfam" id="TIGR00059">
    <property type="entry name" value="L17"/>
    <property type="match status" value="1"/>
</dbReference>
<dbReference type="PANTHER" id="PTHR14413:SF16">
    <property type="entry name" value="LARGE RIBOSOMAL SUBUNIT PROTEIN BL17M"/>
    <property type="match status" value="1"/>
</dbReference>
<dbReference type="PANTHER" id="PTHR14413">
    <property type="entry name" value="RIBOSOMAL PROTEIN L17"/>
    <property type="match status" value="1"/>
</dbReference>
<dbReference type="Pfam" id="PF01196">
    <property type="entry name" value="Ribosomal_L17"/>
    <property type="match status" value="1"/>
</dbReference>
<dbReference type="SUPFAM" id="SSF64263">
    <property type="entry name" value="Prokaryotic ribosomal protein L17"/>
    <property type="match status" value="1"/>
</dbReference>
<dbReference type="PROSITE" id="PS01167">
    <property type="entry name" value="RIBOSOMAL_L17"/>
    <property type="match status" value="1"/>
</dbReference>
<comment type="function">
    <text evidence="1">Component of the mitochondrial ribosome (mitoribosome), a dedicated translation machinery responsible for the synthesis of mitochondrial genome-encoded proteins, including at least some of the essential transmembrane subunits of the mitochondrial respiratory chain. The mitoribosomes are attached to the mitochondrial inner membrane and translation products are cotranslationally integrated into the membrane.</text>
</comment>
<comment type="subunit">
    <text evidence="1">Component of the mitochondrial large ribosomal subunit (mt-LSU). Mature yeast 74S mitochondrial ribosomes consist of a small (37S) and a large (54S) subunit. The 37S small subunit contains a 15S ribosomal RNA (15S mt-rRNA) and at least 32 different proteins. The 54S large subunit contains a 21S rRNA (21S mt-rRNA) and at least 45 different proteins.</text>
</comment>
<comment type="subcellular location">
    <subcellularLocation>
        <location evidence="3">Mitochondrion</location>
    </subcellularLocation>
</comment>
<comment type="similarity">
    <text evidence="4">Belongs to the bacterial ribosomal protein bL17 family.</text>
</comment>
<name>RM08_SCHPO</name>
<keyword id="KW-0496">Mitochondrion</keyword>
<keyword id="KW-1185">Reference proteome</keyword>
<keyword id="KW-0687">Ribonucleoprotein</keyword>
<keyword id="KW-0689">Ribosomal protein</keyword>
<gene>
    <name type="primary">mrpl8</name>
    <name type="ORF">SPBC1271.13</name>
</gene>
<protein>
    <recommendedName>
        <fullName evidence="4">Large ribosomal subunit protein bL17m</fullName>
    </recommendedName>
    <alternativeName>
        <fullName>54S ribosomal protein L8, mitochondrial</fullName>
    </alternativeName>
</protein>
<organism>
    <name type="scientific">Schizosaccharomyces pombe (strain 972 / ATCC 24843)</name>
    <name type="common">Fission yeast</name>
    <dbReference type="NCBI Taxonomy" id="284812"/>
    <lineage>
        <taxon>Eukaryota</taxon>
        <taxon>Fungi</taxon>
        <taxon>Dikarya</taxon>
        <taxon>Ascomycota</taxon>
        <taxon>Taphrinomycotina</taxon>
        <taxon>Schizosaccharomycetes</taxon>
        <taxon>Schizosaccharomycetales</taxon>
        <taxon>Schizosaccharomycetaceae</taxon>
        <taxon>Schizosaccharomyces</taxon>
    </lineage>
</organism>